<organism>
    <name type="scientific">Meloidogyne arenaria</name>
    <name type="common">Peanut root-knot nematode</name>
    <dbReference type="NCBI Taxonomy" id="6304"/>
    <lineage>
        <taxon>Eukaryota</taxon>
        <taxon>Metazoa</taxon>
        <taxon>Ecdysozoa</taxon>
        <taxon>Nematoda</taxon>
        <taxon>Chromadorea</taxon>
        <taxon>Rhabditida</taxon>
        <taxon>Tylenchina</taxon>
        <taxon>Tylenchomorpha</taxon>
        <taxon>Tylenchoidea</taxon>
        <taxon>Meloidogynidae</taxon>
        <taxon>Meloidogyninae</taxon>
        <taxon>Meloidogyne</taxon>
        <taxon>Meloidogyne incognita group</taxon>
    </lineage>
</organism>
<evidence type="ECO:0000250" key="1"/>
<evidence type="ECO:0000255" key="2"/>
<evidence type="ECO:0000269" key="3">
    <source>
    </source>
</evidence>
<evidence type="ECO:0000305" key="4"/>
<dbReference type="EMBL" id="DQ841122">
    <property type="protein sequence ID" value="ABI33932.1"/>
    <property type="molecule type" value="Genomic_DNA"/>
</dbReference>
<dbReference type="GO" id="GO:0005576">
    <property type="term" value="C:extracellular region"/>
    <property type="evidence" value="ECO:0007669"/>
    <property type="project" value="UniProtKB-SubCell"/>
</dbReference>
<dbReference type="GO" id="GO:0030430">
    <property type="term" value="C:host cell cytoplasm"/>
    <property type="evidence" value="ECO:0007669"/>
    <property type="project" value="UniProtKB-SubCell"/>
</dbReference>
<dbReference type="GO" id="GO:0043655">
    <property type="term" value="C:host extracellular space"/>
    <property type="evidence" value="ECO:0007669"/>
    <property type="project" value="UniProtKB-SubCell"/>
</dbReference>
<dbReference type="GO" id="GO:0030154">
    <property type="term" value="P:cell differentiation"/>
    <property type="evidence" value="ECO:0007669"/>
    <property type="project" value="UniProtKB-KW"/>
</dbReference>
<proteinExistence type="evidence at transcript level"/>
<accession>Q06JG5</accession>
<gene>
    <name type="primary">16D10</name>
</gene>
<reference key="1">
    <citation type="journal article" date="2006" name="Proc. Natl. Acad. Sci. U.S.A.">
        <title>Engineering broad root-knot resistance in transgenic plants by RNAi silencing of a conserved and essential root-knot nematode parasitism gene.</title>
        <authorList>
            <person name="Huang G."/>
            <person name="Allen R."/>
            <person name="Davis E.L."/>
            <person name="Baum T.J."/>
            <person name="Hussey R.S."/>
        </authorList>
    </citation>
    <scope>NUCLEOTIDE SEQUENCE [GENOMIC DNA]</scope>
    <scope>FUNCTION</scope>
</reference>
<reference key="2">
    <citation type="journal article" date="2008" name="Curr. Opin. Plant Biol.">
        <title>Diverse and conserved roles of CLE peptides.</title>
        <authorList>
            <person name="Mitchum M.G."/>
            <person name="Wang X."/>
            <person name="Davis E.L."/>
        </authorList>
    </citation>
    <scope>REVIEW</scope>
</reference>
<name>16D10_MELAR</name>
<protein>
    <recommendedName>
        <fullName>CLAVATA3/ESR (CLE)-related protein 16D10</fullName>
    </recommendedName>
</protein>
<sequence length="43" mass="4625">MFTNSIKNLIIYLMPLMVTLMLLSVSFVDAGKKPSGPNPGGNN</sequence>
<feature type="signal peptide" evidence="2">
    <location>
        <begin position="1"/>
        <end position="30"/>
    </location>
</feature>
<feature type="chain" id="PRO_0000401218" description="CLAVATA3/ESR (CLE)-related protein 16D10">
    <location>
        <begin position="31"/>
        <end position="43"/>
    </location>
</feature>
<feature type="short sequence motif" description="CLE">
    <location>
        <begin position="31"/>
        <end position="43"/>
    </location>
</feature>
<comment type="function">
    <text evidence="3">Plays a role in the differentiation or division of feeding cells (syncytia) induced in plant roots during infection. Promotes host root growth.</text>
</comment>
<comment type="subcellular location">
    <subcellularLocation>
        <location evidence="1">Secreted</location>
    </subcellularLocation>
    <subcellularLocation>
        <location evidence="1">Host cytoplasm</location>
    </subcellularLocation>
    <subcellularLocation>
        <location evidence="1">Host extracellular space</location>
    </subcellularLocation>
    <text evidence="1">Secreted into host root cells via the nematode stylet to transform the recipient cells into enlarged multinucleate feeding cells called giant-cells or syncytia.</text>
</comment>
<comment type="tissue specificity">
    <text>Highly expressed exclusively within the subventral esophageal gland cell during syncytium formation in host plants.</text>
</comment>
<comment type="similarity">
    <text evidence="4">Belongs to the CLV3/ESR signal peptide family.</text>
</comment>
<keyword id="KW-0221">Differentiation</keyword>
<keyword id="KW-1035">Host cytoplasm</keyword>
<keyword id="KW-0964">Secreted</keyword>
<keyword id="KW-0732">Signal</keyword>